<keyword id="KW-0227">DNA damage</keyword>
<keyword id="KW-0234">DNA repair</keyword>
<keyword id="KW-0460">Magnesium</keyword>
<keyword id="KW-0464">Manganese</keyword>
<keyword id="KW-0479">Metal-binding</keyword>
<keyword id="KW-0548">Nucleotidyltransferase</keyword>
<keyword id="KW-0539">Nucleus</keyword>
<keyword id="KW-1185">Reference proteome</keyword>
<keyword id="KW-0677">Repeat</keyword>
<keyword id="KW-0808">Transferase</keyword>
<keyword id="KW-0832">Ubl conjugation</keyword>
<keyword id="KW-0862">Zinc</keyword>
<keyword id="KW-0863">Zinc-finger</keyword>
<name>POLH_DROME</name>
<proteinExistence type="evidence at protein level"/>
<sequence length="885" mass="99026">MSSARSHVSMQNKYDRVVLLVDMDCFFCQVEEKQHPEYRNRPLAVVQYNPWRGGGIIAVNYAARAKGVTRHMRGDEAKDLCPEIVLCQVPNIREKADTSKYRDAGKEVANVLQRFTQLLERASVDEAYLDITETVNHRMQQMQSGAFALQPQELVNTFAVGYPSIGDYVNKITNRFANPYMDDERYQMSYDQNDLPAVRQSDIRLLIGASVAGEVRAAVKKETGYECSAGIAHNKILAKLAAGMNKPNKQTILPLTETASLFDSLPVGKIKGLGGKFGEVVCETLGIKFMGQVVKFSEVDLQRKFDEKNGTWLFNISRGIDLEAVTPRFYSKSIGCCKKFPGRNNITGLKTLQHWLGELSSEINDRLEKDFIENNRRAKHMVVQYVQDIDGEEVASSRSTALRDYDQESIVRLSLDLIKANTKTFLRPGSESALNNAIKFLGISVGKFETVSSGQNKLQEMFANQAAKKRRVSGDEPGQLPKVEMEKKQKQTDEFKMKSFFANYLQGAKKEDAKADGISANPLAAAAGAPNKNFVEEYKHKLHAAVRTEGTVLTSTPAEFKESFFSQYLKQQKKTGQQGSVTSREDSLDVQELAEELDAIEADNSKDFEEDTEEETELTSDTHMSKPEGQSSDAGQEQDPNTLNDSTGNDLYVETGIVPPTLTEDELKPSTSKRKFDEIESSVSNYKECYVEFAVPNLRTDILPTIKCDQCGANIPDEVKSLQTHRDHHFAQELSRTLRSTEREERTQSRQKISLKPTPPKKSKKTAGSGSSSYSTAPPSNSITKFFRAKPTQEQAPSDPQMNQCPECKAFIKCVDMPEHLDYHVARNLQRELNQQDLRTRTAALNKEKISPVQPKKQSQKKLNSTISASSSGTKTIAQFFSQSN</sequence>
<dbReference type="EC" id="2.7.7.7" evidence="5"/>
<dbReference type="EMBL" id="AB049433">
    <property type="protein sequence ID" value="BAB15799.1"/>
    <property type="molecule type" value="mRNA"/>
</dbReference>
<dbReference type="EMBL" id="AB036766">
    <property type="protein sequence ID" value="BAB20905.1"/>
    <property type="molecule type" value="mRNA"/>
</dbReference>
<dbReference type="EMBL" id="AE014296">
    <property type="protein sequence ID" value="AAF51794.1"/>
    <property type="molecule type" value="Genomic_DNA"/>
</dbReference>
<dbReference type="EMBL" id="AY058771">
    <property type="protein sequence ID" value="AAL14000.1"/>
    <property type="molecule type" value="mRNA"/>
</dbReference>
<dbReference type="EMBL" id="BT150322">
    <property type="protein sequence ID" value="AGW25604.1"/>
    <property type="status" value="ALT_INIT"/>
    <property type="molecule type" value="mRNA"/>
</dbReference>
<dbReference type="RefSeq" id="NP_649371.2">
    <property type="nucleotide sequence ID" value="NM_141114.3"/>
</dbReference>
<dbReference type="SMR" id="Q9VNX1"/>
<dbReference type="FunCoup" id="Q9VNX1">
    <property type="interactions" value="1659"/>
</dbReference>
<dbReference type="IntAct" id="Q9VNX1">
    <property type="interactions" value="6"/>
</dbReference>
<dbReference type="STRING" id="7227.FBpp0078142"/>
<dbReference type="PaxDb" id="7227-FBpp0078142"/>
<dbReference type="EnsemblMetazoa" id="FBtr0078489">
    <property type="protein sequence ID" value="FBpp0078142"/>
    <property type="gene ID" value="FBgn0037141"/>
</dbReference>
<dbReference type="GeneID" id="40438"/>
<dbReference type="KEGG" id="dme:Dmel_CG7143"/>
<dbReference type="UCSC" id="CG7143-RA">
    <property type="organism name" value="d. melanogaster"/>
</dbReference>
<dbReference type="AGR" id="FB:FBgn0037141"/>
<dbReference type="CTD" id="5429"/>
<dbReference type="FlyBase" id="FBgn0037141">
    <property type="gene designation" value="PolH"/>
</dbReference>
<dbReference type="VEuPathDB" id="VectorBase:FBgn0037141"/>
<dbReference type="eggNOG" id="KOG2095">
    <property type="taxonomic scope" value="Eukaryota"/>
</dbReference>
<dbReference type="GeneTree" id="ENSGT00940000157048"/>
<dbReference type="HOGENOM" id="CLU_012348_7_2_1"/>
<dbReference type="InParanoid" id="Q9VNX1"/>
<dbReference type="OMA" id="MQNKYDR"/>
<dbReference type="OrthoDB" id="5723at2759"/>
<dbReference type="PhylomeDB" id="Q9VNX1"/>
<dbReference type="Reactome" id="R-DME-110320">
    <property type="pathway name" value="Translesion Synthesis by POLH"/>
</dbReference>
<dbReference type="BioGRID-ORCS" id="40438">
    <property type="hits" value="0 hits in 1 CRISPR screen"/>
</dbReference>
<dbReference type="GenomeRNAi" id="40438"/>
<dbReference type="PRO" id="PR:Q9VNX1"/>
<dbReference type="Proteomes" id="UP000000803">
    <property type="component" value="Chromosome 3L"/>
</dbReference>
<dbReference type="Bgee" id="FBgn0037141">
    <property type="expression patterns" value="Expressed in spermatogonium in testis and 38 other cell types or tissues"/>
</dbReference>
<dbReference type="GO" id="GO:0005634">
    <property type="term" value="C:nucleus"/>
    <property type="evidence" value="ECO:0000314"/>
    <property type="project" value="FlyBase"/>
</dbReference>
<dbReference type="GO" id="GO:0005657">
    <property type="term" value="C:replication fork"/>
    <property type="evidence" value="ECO:0000318"/>
    <property type="project" value="GO_Central"/>
</dbReference>
<dbReference type="GO" id="GO:0035861">
    <property type="term" value="C:site of double-strand break"/>
    <property type="evidence" value="ECO:0000318"/>
    <property type="project" value="GO_Central"/>
</dbReference>
<dbReference type="GO" id="GO:0003684">
    <property type="term" value="F:damaged DNA binding"/>
    <property type="evidence" value="ECO:0007669"/>
    <property type="project" value="InterPro"/>
</dbReference>
<dbReference type="GO" id="GO:0003887">
    <property type="term" value="F:DNA-directed DNA polymerase activity"/>
    <property type="evidence" value="ECO:0000314"/>
    <property type="project" value="FlyBase"/>
</dbReference>
<dbReference type="GO" id="GO:0008270">
    <property type="term" value="F:zinc ion binding"/>
    <property type="evidence" value="ECO:0007669"/>
    <property type="project" value="UniProtKB-KW"/>
</dbReference>
<dbReference type="GO" id="GO:0006302">
    <property type="term" value="P:double-strand break repair"/>
    <property type="evidence" value="ECO:0000315"/>
    <property type="project" value="FlyBase"/>
</dbReference>
<dbReference type="GO" id="GO:0042276">
    <property type="term" value="P:error-prone translesion synthesis"/>
    <property type="evidence" value="ECO:0000318"/>
    <property type="project" value="GO_Central"/>
</dbReference>
<dbReference type="GO" id="GO:0009314">
    <property type="term" value="P:response to radiation"/>
    <property type="evidence" value="ECO:0000315"/>
    <property type="project" value="FlyBase"/>
</dbReference>
<dbReference type="GO" id="GO:0019985">
    <property type="term" value="P:translesion synthesis"/>
    <property type="evidence" value="ECO:0000314"/>
    <property type="project" value="FlyBase"/>
</dbReference>
<dbReference type="GO" id="GO:0009650">
    <property type="term" value="P:UV protection"/>
    <property type="evidence" value="ECO:0000315"/>
    <property type="project" value="FlyBase"/>
</dbReference>
<dbReference type="CDD" id="cd01702">
    <property type="entry name" value="PolY_Pol_eta"/>
    <property type="match status" value="1"/>
</dbReference>
<dbReference type="FunFam" id="3.30.1490.100:FF:000007">
    <property type="entry name" value="DNA polymerase eta"/>
    <property type="match status" value="1"/>
</dbReference>
<dbReference type="FunFam" id="3.40.1170.60:FF:000003">
    <property type="entry name" value="DNA polymerase eta"/>
    <property type="match status" value="1"/>
</dbReference>
<dbReference type="FunFam" id="1.10.150.20:FF:000014">
    <property type="entry name" value="Polymerase (DNA directed), eta"/>
    <property type="match status" value="1"/>
</dbReference>
<dbReference type="Gene3D" id="3.30.70.270">
    <property type="match status" value="1"/>
</dbReference>
<dbReference type="Gene3D" id="3.40.1170.60">
    <property type="match status" value="1"/>
</dbReference>
<dbReference type="Gene3D" id="1.10.150.20">
    <property type="entry name" value="5' to 3' exonuclease, C-terminal subdomain"/>
    <property type="match status" value="1"/>
</dbReference>
<dbReference type="Gene3D" id="3.30.1490.100">
    <property type="entry name" value="DNA polymerase, Y-family, little finger domain"/>
    <property type="match status" value="1"/>
</dbReference>
<dbReference type="InterPro" id="IPR043502">
    <property type="entry name" value="DNA/RNA_pol_sf"/>
</dbReference>
<dbReference type="InterPro" id="IPR036775">
    <property type="entry name" value="DNA_pol_Y-fam_lit_finger_sf"/>
</dbReference>
<dbReference type="InterPro" id="IPR017961">
    <property type="entry name" value="DNA_pol_Y-fam_little_finger"/>
</dbReference>
<dbReference type="InterPro" id="IPR052230">
    <property type="entry name" value="DNA_polymerase_eta"/>
</dbReference>
<dbReference type="InterPro" id="IPR043128">
    <property type="entry name" value="Rev_trsase/Diguanyl_cyclase"/>
</dbReference>
<dbReference type="InterPro" id="IPR041298">
    <property type="entry name" value="UBZ3"/>
</dbReference>
<dbReference type="InterPro" id="IPR001126">
    <property type="entry name" value="UmuC"/>
</dbReference>
<dbReference type="PANTHER" id="PTHR45873">
    <property type="entry name" value="DNA POLYMERASE ETA"/>
    <property type="match status" value="1"/>
</dbReference>
<dbReference type="PANTHER" id="PTHR45873:SF1">
    <property type="entry name" value="DNA POLYMERASE ETA"/>
    <property type="match status" value="1"/>
</dbReference>
<dbReference type="Pfam" id="PF00817">
    <property type="entry name" value="IMS"/>
    <property type="match status" value="1"/>
</dbReference>
<dbReference type="Pfam" id="PF11799">
    <property type="entry name" value="IMS_C"/>
    <property type="match status" value="1"/>
</dbReference>
<dbReference type="Pfam" id="PF21704">
    <property type="entry name" value="POLH-Rev1_HhH"/>
    <property type="match status" value="1"/>
</dbReference>
<dbReference type="Pfam" id="PF18439">
    <property type="entry name" value="zf_UBZ"/>
    <property type="match status" value="2"/>
</dbReference>
<dbReference type="PIRSF" id="PIRSF036603">
    <property type="entry name" value="DPol_eta"/>
    <property type="match status" value="1"/>
</dbReference>
<dbReference type="SUPFAM" id="SSF56672">
    <property type="entry name" value="DNA/RNA polymerases"/>
    <property type="match status" value="1"/>
</dbReference>
<dbReference type="SUPFAM" id="SSF100879">
    <property type="entry name" value="Lesion bypass DNA polymerase (Y-family), little finger domain"/>
    <property type="match status" value="1"/>
</dbReference>
<dbReference type="PROSITE" id="PS50173">
    <property type="entry name" value="UMUC"/>
    <property type="match status" value="1"/>
</dbReference>
<dbReference type="PROSITE" id="PS51907">
    <property type="entry name" value="ZF_UBZ3"/>
    <property type="match status" value="2"/>
</dbReference>
<organism evidence="16">
    <name type="scientific">Drosophila melanogaster</name>
    <name type="common">Fruit fly</name>
    <dbReference type="NCBI Taxonomy" id="7227"/>
    <lineage>
        <taxon>Eukaryota</taxon>
        <taxon>Metazoa</taxon>
        <taxon>Ecdysozoa</taxon>
        <taxon>Arthropoda</taxon>
        <taxon>Hexapoda</taxon>
        <taxon>Insecta</taxon>
        <taxon>Pterygota</taxon>
        <taxon>Neoptera</taxon>
        <taxon>Endopterygota</taxon>
        <taxon>Diptera</taxon>
        <taxon>Brachycera</taxon>
        <taxon>Muscomorpha</taxon>
        <taxon>Ephydroidea</taxon>
        <taxon>Drosophilidae</taxon>
        <taxon>Drosophila</taxon>
        <taxon>Sophophora</taxon>
    </lineage>
</organism>
<reference evidence="13" key="1">
    <citation type="journal article" date="2001" name="J. Biol. Chem.">
        <title>Mutagenic and nonmutagenic bypass of DNA lesions by Drosophila DNA polymerases dpoleta and dpoliota.</title>
        <authorList>
            <person name="Ishikawa T."/>
            <person name="Uematsu N."/>
            <person name="Mizukoshi T."/>
            <person name="Iwai S."/>
            <person name="Iwasaki H."/>
            <person name="Masutani C."/>
            <person name="Hanaoka F."/>
            <person name="Ueda R."/>
            <person name="Ohmori H."/>
            <person name="Todo T."/>
        </authorList>
    </citation>
    <scope>NUCLEOTIDE SEQUENCE [MRNA]</scope>
    <scope>FUNCTION</scope>
    <scope>CATALYTIC ACTIVITY</scope>
    <scope>MUTAGENESIS OF 125-ASP-GLU-126</scope>
</reference>
<reference evidence="14" key="2">
    <citation type="submission" date="2000-01" db="EMBL/GenBank/DDBJ databases">
        <title>DNA polymerase eta from Drosophila melanogaster.</title>
        <authorList>
            <person name="Oshige M."/>
            <person name="Kimura S."/>
            <person name="Takata K."/>
            <person name="Sakaguchi K."/>
        </authorList>
    </citation>
    <scope>NUCLEOTIDE SEQUENCE [MRNA]</scope>
</reference>
<reference evidence="16" key="3">
    <citation type="journal article" date="2000" name="Science">
        <title>The genome sequence of Drosophila melanogaster.</title>
        <authorList>
            <person name="Adams M.D."/>
            <person name="Celniker S.E."/>
            <person name="Holt R.A."/>
            <person name="Evans C.A."/>
            <person name="Gocayne J.D."/>
            <person name="Amanatides P.G."/>
            <person name="Scherer S.E."/>
            <person name="Li P.W."/>
            <person name="Hoskins R.A."/>
            <person name="Galle R.F."/>
            <person name="George R.A."/>
            <person name="Lewis S.E."/>
            <person name="Richards S."/>
            <person name="Ashburner M."/>
            <person name="Henderson S.N."/>
            <person name="Sutton G.G."/>
            <person name="Wortman J.R."/>
            <person name="Yandell M.D."/>
            <person name="Zhang Q."/>
            <person name="Chen L.X."/>
            <person name="Brandon R.C."/>
            <person name="Rogers Y.-H.C."/>
            <person name="Blazej R.G."/>
            <person name="Champe M."/>
            <person name="Pfeiffer B.D."/>
            <person name="Wan K.H."/>
            <person name="Doyle C."/>
            <person name="Baxter E.G."/>
            <person name="Helt G."/>
            <person name="Nelson C.R."/>
            <person name="Miklos G.L.G."/>
            <person name="Abril J.F."/>
            <person name="Agbayani A."/>
            <person name="An H.-J."/>
            <person name="Andrews-Pfannkoch C."/>
            <person name="Baldwin D."/>
            <person name="Ballew R.M."/>
            <person name="Basu A."/>
            <person name="Baxendale J."/>
            <person name="Bayraktaroglu L."/>
            <person name="Beasley E.M."/>
            <person name="Beeson K.Y."/>
            <person name="Benos P.V."/>
            <person name="Berman B.P."/>
            <person name="Bhandari D."/>
            <person name="Bolshakov S."/>
            <person name="Borkova D."/>
            <person name="Botchan M.R."/>
            <person name="Bouck J."/>
            <person name="Brokstein P."/>
            <person name="Brottier P."/>
            <person name="Burtis K.C."/>
            <person name="Busam D.A."/>
            <person name="Butler H."/>
            <person name="Cadieu E."/>
            <person name="Center A."/>
            <person name="Chandra I."/>
            <person name="Cherry J.M."/>
            <person name="Cawley S."/>
            <person name="Dahlke C."/>
            <person name="Davenport L.B."/>
            <person name="Davies P."/>
            <person name="de Pablos B."/>
            <person name="Delcher A."/>
            <person name="Deng Z."/>
            <person name="Mays A.D."/>
            <person name="Dew I."/>
            <person name="Dietz S.M."/>
            <person name="Dodson K."/>
            <person name="Doup L.E."/>
            <person name="Downes M."/>
            <person name="Dugan-Rocha S."/>
            <person name="Dunkov B.C."/>
            <person name="Dunn P."/>
            <person name="Durbin K.J."/>
            <person name="Evangelista C.C."/>
            <person name="Ferraz C."/>
            <person name="Ferriera S."/>
            <person name="Fleischmann W."/>
            <person name="Fosler C."/>
            <person name="Gabrielian A.E."/>
            <person name="Garg N.S."/>
            <person name="Gelbart W.M."/>
            <person name="Glasser K."/>
            <person name="Glodek A."/>
            <person name="Gong F."/>
            <person name="Gorrell J.H."/>
            <person name="Gu Z."/>
            <person name="Guan P."/>
            <person name="Harris M."/>
            <person name="Harris N.L."/>
            <person name="Harvey D.A."/>
            <person name="Heiman T.J."/>
            <person name="Hernandez J.R."/>
            <person name="Houck J."/>
            <person name="Hostin D."/>
            <person name="Houston K.A."/>
            <person name="Howland T.J."/>
            <person name="Wei M.-H."/>
            <person name="Ibegwam C."/>
            <person name="Jalali M."/>
            <person name="Kalush F."/>
            <person name="Karpen G.H."/>
            <person name="Ke Z."/>
            <person name="Kennison J.A."/>
            <person name="Ketchum K.A."/>
            <person name="Kimmel B.E."/>
            <person name="Kodira C.D."/>
            <person name="Kraft C.L."/>
            <person name="Kravitz S."/>
            <person name="Kulp D."/>
            <person name="Lai Z."/>
            <person name="Lasko P."/>
            <person name="Lei Y."/>
            <person name="Levitsky A.A."/>
            <person name="Li J.H."/>
            <person name="Li Z."/>
            <person name="Liang Y."/>
            <person name="Lin X."/>
            <person name="Liu X."/>
            <person name="Mattei B."/>
            <person name="McIntosh T.C."/>
            <person name="McLeod M.P."/>
            <person name="McPherson D."/>
            <person name="Merkulov G."/>
            <person name="Milshina N.V."/>
            <person name="Mobarry C."/>
            <person name="Morris J."/>
            <person name="Moshrefi A."/>
            <person name="Mount S.M."/>
            <person name="Moy M."/>
            <person name="Murphy B."/>
            <person name="Murphy L."/>
            <person name="Muzny D.M."/>
            <person name="Nelson D.L."/>
            <person name="Nelson D.R."/>
            <person name="Nelson K.A."/>
            <person name="Nixon K."/>
            <person name="Nusskern D.R."/>
            <person name="Pacleb J.M."/>
            <person name="Palazzolo M."/>
            <person name="Pittman G.S."/>
            <person name="Pan S."/>
            <person name="Pollard J."/>
            <person name="Puri V."/>
            <person name="Reese M.G."/>
            <person name="Reinert K."/>
            <person name="Remington K."/>
            <person name="Saunders R.D.C."/>
            <person name="Scheeler F."/>
            <person name="Shen H."/>
            <person name="Shue B.C."/>
            <person name="Siden-Kiamos I."/>
            <person name="Simpson M."/>
            <person name="Skupski M.P."/>
            <person name="Smith T.J."/>
            <person name="Spier E."/>
            <person name="Spradling A.C."/>
            <person name="Stapleton M."/>
            <person name="Strong R."/>
            <person name="Sun E."/>
            <person name="Svirskas R."/>
            <person name="Tector C."/>
            <person name="Turner R."/>
            <person name="Venter E."/>
            <person name="Wang A.H."/>
            <person name="Wang X."/>
            <person name="Wang Z.-Y."/>
            <person name="Wassarman D.A."/>
            <person name="Weinstock G.M."/>
            <person name="Weissenbach J."/>
            <person name="Williams S.M."/>
            <person name="Woodage T."/>
            <person name="Worley K.C."/>
            <person name="Wu D."/>
            <person name="Yang S."/>
            <person name="Yao Q.A."/>
            <person name="Ye J."/>
            <person name="Yeh R.-F."/>
            <person name="Zaveri J.S."/>
            <person name="Zhan M."/>
            <person name="Zhang G."/>
            <person name="Zhao Q."/>
            <person name="Zheng L."/>
            <person name="Zheng X.H."/>
            <person name="Zhong F.N."/>
            <person name="Zhong W."/>
            <person name="Zhou X."/>
            <person name="Zhu S.C."/>
            <person name="Zhu X."/>
            <person name="Smith H.O."/>
            <person name="Gibbs R.A."/>
            <person name="Myers E.W."/>
            <person name="Rubin G.M."/>
            <person name="Venter J.C."/>
        </authorList>
    </citation>
    <scope>NUCLEOTIDE SEQUENCE [LARGE SCALE GENOMIC DNA]</scope>
    <source>
        <strain evidence="16">Berkeley</strain>
    </source>
</reference>
<reference evidence="16" key="4">
    <citation type="journal article" date="2002" name="Genome Biol.">
        <title>Annotation of the Drosophila melanogaster euchromatic genome: a systematic review.</title>
        <authorList>
            <person name="Misra S."/>
            <person name="Crosby M.A."/>
            <person name="Mungall C.J."/>
            <person name="Matthews B.B."/>
            <person name="Campbell K.S."/>
            <person name="Hradecky P."/>
            <person name="Huang Y."/>
            <person name="Kaminker J.S."/>
            <person name="Millburn G.H."/>
            <person name="Prochnik S.E."/>
            <person name="Smith C.D."/>
            <person name="Tupy J.L."/>
            <person name="Whitfield E.J."/>
            <person name="Bayraktaroglu L."/>
            <person name="Berman B.P."/>
            <person name="Bettencourt B.R."/>
            <person name="Celniker S.E."/>
            <person name="de Grey A.D.N.J."/>
            <person name="Drysdale R.A."/>
            <person name="Harris N.L."/>
            <person name="Richter J."/>
            <person name="Russo S."/>
            <person name="Schroeder A.J."/>
            <person name="Shu S.Q."/>
            <person name="Stapleton M."/>
            <person name="Yamada C."/>
            <person name="Ashburner M."/>
            <person name="Gelbart W.M."/>
            <person name="Rubin G.M."/>
            <person name="Lewis S.E."/>
        </authorList>
    </citation>
    <scope>GENOME REANNOTATION</scope>
    <source>
        <strain evidence="16">Berkeley</strain>
    </source>
</reference>
<reference evidence="11" key="5">
    <citation type="journal article" date="2002" name="Genome Biol.">
        <title>A Drosophila full-length cDNA resource.</title>
        <authorList>
            <person name="Stapleton M."/>
            <person name="Carlson J.W."/>
            <person name="Brokstein P."/>
            <person name="Yu C."/>
            <person name="Champe M."/>
            <person name="George R.A."/>
            <person name="Guarin H."/>
            <person name="Kronmiller B."/>
            <person name="Pacleb J.M."/>
            <person name="Park S."/>
            <person name="Wan K.H."/>
            <person name="Rubin G.M."/>
            <person name="Celniker S.E."/>
        </authorList>
    </citation>
    <scope>NUCLEOTIDE SEQUENCE [LARGE SCALE MRNA]</scope>
    <source>
        <strain evidence="11">Berkeley</strain>
        <tissue evidence="11">Embryo</tissue>
    </source>
</reference>
<reference evidence="12" key="6">
    <citation type="submission" date="2013-09" db="EMBL/GenBank/DDBJ databases">
        <authorList>
            <person name="Carlson J."/>
            <person name="Booth B."/>
            <person name="Frise E."/>
            <person name="Park S."/>
            <person name="Wan K."/>
            <person name="Yu C."/>
            <person name="Celniker S."/>
        </authorList>
    </citation>
    <scope>NUCLEOTIDE SEQUENCE [LARGE SCALE MRNA]</scope>
</reference>
<reference evidence="9" key="7">
    <citation type="journal article" date="2012" name="PLoS Genet.">
        <title>Competition between replicative and translesion polymerases during homologous recombination repair in Drosophila.</title>
        <authorList>
            <person name="Kane D.P."/>
            <person name="Shusterman M."/>
            <person name="Rong Y."/>
            <person name="McVey M."/>
        </authorList>
    </citation>
    <scope>FUNCTION</scope>
    <scope>DISRUPTION PHENOTYPE</scope>
</reference>
<reference evidence="9" key="8">
    <citation type="journal article" date="2014" name="Development">
        <title>TRIP/NOPO E3 ubiquitin ligase promotes ubiquitylation of DNA polymerase eta.</title>
        <authorList>
            <person name="Wallace H.A."/>
            <person name="Merkle J.A."/>
            <person name="Yu M.C."/>
            <person name="Berg T.G."/>
            <person name="Lee E."/>
            <person name="Bosco G."/>
            <person name="Lee L.A."/>
        </authorList>
    </citation>
    <scope>FUNCTION</scope>
    <scope>INTERACTION WITH NOPO</scope>
    <scope>SUBCELLULAR LOCATION</scope>
    <scope>TISSUE SPECIFICITY</scope>
    <scope>DEVELOPMENTAL STAGE</scope>
    <scope>UBIQUITINATION</scope>
    <scope>DISRUPTION PHENOTYPE</scope>
</reference>
<protein>
    <recommendedName>
        <fullName evidence="15">DNA polymerase eta</fullName>
        <ecNumber evidence="5">2.7.7.7</ecNumber>
    </recommendedName>
</protein>
<comment type="function">
    <text evidence="1 5 6 7">DNA polymerase specifically involved in the DNA repair by translesion synthesis (TLS) (PubMed:11297519). Plays an important role in translesion synthesis, where the normal high-fidelity DNA polymerases cannot proceed and DNA synthesis stalls (PubMed:11297519). Inserts one or 2 nucleotide(s) opposite the lesion (PubMed:11297519). During homologous recombination (HR) repair, has a overlapping role with the error-prone translesion polymerase PolZ1/DNApol-zeta to initiate repair synthesis that is completed by end joining or another polymerase that can bind and reinitiate synthesis (PubMed:22532806). Particularly important for the repair of UV-induced pyrimidine dimers and for hydroxyurea (HU)-induced DNA damage (PubMed:22532806, PubMed:24553286). Although inserts the correct base, may cause base transitions and transversions depending upon the context (By similarity). Forms a Schiff base with 5'-deoxyribose phosphate at abasic sites, but does not have any lyase activity, preventing the release of the 5'-deoxyribose phosphate (5'-dRP) residue (By similarity). This covalent trapping of the enzyme by the 5'-dRP residue inhibits its DNA synthetic activity during base excision repair, thereby avoiding high incidence of mutagenesis (By similarity).</text>
</comment>
<comment type="catalytic activity">
    <reaction evidence="5">
        <text>DNA(n) + a 2'-deoxyribonucleoside 5'-triphosphate = DNA(n+1) + diphosphate</text>
        <dbReference type="Rhea" id="RHEA:22508"/>
        <dbReference type="Rhea" id="RHEA-COMP:17339"/>
        <dbReference type="Rhea" id="RHEA-COMP:17340"/>
        <dbReference type="ChEBI" id="CHEBI:33019"/>
        <dbReference type="ChEBI" id="CHEBI:61560"/>
        <dbReference type="ChEBI" id="CHEBI:173112"/>
        <dbReference type="EC" id="2.7.7.7"/>
    </reaction>
</comment>
<comment type="cofactor">
    <cofactor evidence="1">
        <name>Mg(2+)</name>
        <dbReference type="ChEBI" id="CHEBI:18420"/>
    </cofactor>
    <cofactor evidence="1">
        <name>Mn(2+)</name>
        <dbReference type="ChEBI" id="CHEBI:29035"/>
    </cofactor>
    <text evidence="1">Binds 2 Mg(2+). Prefers Mg(2+), but can also use Mn(2+). In vitro, can also utilize other divalent cations such as Ca(2+).</text>
</comment>
<comment type="activity regulation">
    <text evidence="1">The enzyme in complex with the DNA substrate binds a third divalent metal cation. This binding is essential for catalyzing the DNA synthesis.</text>
</comment>
<comment type="subunit">
    <text evidence="7">Interacts (via C-terminus) with nopo.</text>
</comment>
<comment type="interaction">
    <interactant intactId="EBI-115702">
        <id>Q9VNX1</id>
    </interactant>
    <interactant intactId="EBI-95229">
        <id>Q9W0P2</id>
        <label>Rev1</label>
    </interactant>
    <organismsDiffer>false</organismsDiffer>
    <experiments>2</experiments>
</comment>
<comment type="subcellular location">
    <subcellularLocation>
        <location evidence="7">Nucleus</location>
    </subcellularLocation>
    <text evidence="7">Localizes to interphase nuclei but undetectable during mitosis.</text>
</comment>
<comment type="tissue specificity">
    <text evidence="7">Expressed in ovaries and testes.</text>
</comment>
<comment type="developmental stage">
    <text evidence="7">Expressed most highly in 0-2 hour embryos then at lower levels in larvae and pupae.</text>
</comment>
<comment type="domain">
    <text evidence="1">The catalytic core consists of fingers, palm and thumb subdomains, but the fingers and thumb subdomains are much smaller than in high-fidelity polymerases; residues from five sequence motifs of the Y-family cluster around an active site cleft that can accommodate DNA and nucleotide substrates with relaxed geometric constraints, with consequently higher rates of misincorporation and low processivity.</text>
</comment>
<comment type="PTM">
    <text evidence="7">Ubiquitination enhanced by nopo.</text>
</comment>
<comment type="disruption phenotype">
    <text evidence="6 7">Viable and fertile (PubMed:24553286). Results in spindle defects (PubMed:24553286). Results in severe sensitivity of third-instar larvae to ultraviolet radiation (UV) (PubMed:22532806, PubMed:24553286). Exhibits a significant reduction in survival after hydroxyurea (HU)-induced DNA damage (PubMed:24553286). Decreases homologous recombination (HR) (PubMed:22532806). Simultaneous knockout of PolH/DNApol-eta and PolZ1/DNApol-zeta does not show any difference in the frequency of full HR repair compared to the single knockouts suggesting they have overlapping roles (PubMed:22532806).</text>
</comment>
<comment type="similarity">
    <text evidence="9">Belongs to the DNA polymerase type-Y family.</text>
</comment>
<comment type="sequence caution" evidence="9">
    <conflict type="erroneous initiation">
        <sequence resource="EMBL-CDS" id="AGW25604"/>
    </conflict>
    <text>Extended N-terminus.</text>
</comment>
<accession>Q9VNX1</accession>
<accession>Q9GNC0</accession>
<accession>T2GGD2</accession>
<feature type="chain" id="PRO_0000448686" description="DNA polymerase eta">
    <location>
        <begin position="1"/>
        <end position="885"/>
    </location>
</feature>
<feature type="domain" description="UmuC" evidence="2">
    <location>
        <begin position="18"/>
        <end position="274"/>
    </location>
</feature>
<feature type="zinc finger region" description="UBZ3-type 1" evidence="3">
    <location>
        <begin position="701"/>
        <end position="737"/>
    </location>
</feature>
<feature type="zinc finger region" description="UBZ3-type 2" evidence="3">
    <location>
        <begin position="798"/>
        <end position="832"/>
    </location>
</feature>
<feature type="region of interest" description="Disordered" evidence="4">
    <location>
        <begin position="599"/>
        <end position="653"/>
    </location>
</feature>
<feature type="region of interest" description="Disordered" evidence="4">
    <location>
        <begin position="658"/>
        <end position="677"/>
    </location>
</feature>
<feature type="region of interest" description="Disordered" evidence="4">
    <location>
        <begin position="722"/>
        <end position="783"/>
    </location>
</feature>
<feature type="region of interest" description="Disordered" evidence="4">
    <location>
        <begin position="846"/>
        <end position="870"/>
    </location>
</feature>
<feature type="compositionally biased region" description="Acidic residues" evidence="4">
    <location>
        <begin position="608"/>
        <end position="618"/>
    </location>
</feature>
<feature type="compositionally biased region" description="Polar residues" evidence="4">
    <location>
        <begin position="628"/>
        <end position="649"/>
    </location>
</feature>
<feature type="compositionally biased region" description="Basic and acidic residues" evidence="4">
    <location>
        <begin position="739"/>
        <end position="748"/>
    </location>
</feature>
<feature type="compositionally biased region" description="Low complexity" evidence="4">
    <location>
        <begin position="766"/>
        <end position="780"/>
    </location>
</feature>
<feature type="active site" evidence="2">
    <location>
        <position position="126"/>
    </location>
</feature>
<feature type="binding site" evidence="1">
    <location>
        <position position="22"/>
    </location>
    <ligand>
        <name>Mg(2+)</name>
        <dbReference type="ChEBI" id="CHEBI:18420"/>
        <label>1</label>
    </ligand>
</feature>
<feature type="binding site" evidence="1">
    <location>
        <position position="22"/>
    </location>
    <ligand>
        <name>Mg(2+)</name>
        <dbReference type="ChEBI" id="CHEBI:18420"/>
        <label>2</label>
    </ligand>
</feature>
<feature type="binding site" evidence="1">
    <location>
        <position position="22"/>
    </location>
    <ligand>
        <name>Mn(2+)</name>
        <dbReference type="ChEBI" id="CHEBI:29035"/>
        <label>1</label>
    </ligand>
</feature>
<feature type="binding site" evidence="1">
    <location>
        <position position="22"/>
    </location>
    <ligand>
        <name>Mn(2+)</name>
        <dbReference type="ChEBI" id="CHEBI:29035"/>
        <label>2</label>
    </ligand>
</feature>
<feature type="binding site" evidence="1">
    <location>
        <position position="23"/>
    </location>
    <ligand>
        <name>Mg(2+)</name>
        <dbReference type="ChEBI" id="CHEBI:18420"/>
        <label>1</label>
    </ligand>
</feature>
<feature type="binding site" evidence="1">
    <location>
        <position position="23"/>
    </location>
    <ligand>
        <name>Mn(2+)</name>
        <dbReference type="ChEBI" id="CHEBI:29035"/>
        <label>1</label>
    </ligand>
</feature>
<feature type="binding site" evidence="1">
    <location>
        <position position="70"/>
    </location>
    <ligand>
        <name>a 2'-deoxyribonucleoside 5'-triphosphate</name>
        <dbReference type="ChEBI" id="CHEBI:61560"/>
    </ligand>
</feature>
<feature type="binding site" evidence="1">
    <location>
        <position position="125"/>
    </location>
    <ligand>
        <name>Mg(2+)</name>
        <dbReference type="ChEBI" id="CHEBI:18420"/>
        <label>1</label>
    </ligand>
</feature>
<feature type="binding site" evidence="1">
    <location>
        <position position="125"/>
    </location>
    <ligand>
        <name>Mg(2+)</name>
        <dbReference type="ChEBI" id="CHEBI:18420"/>
        <label>2</label>
    </ligand>
</feature>
<feature type="binding site" evidence="1">
    <location>
        <position position="125"/>
    </location>
    <ligand>
        <name>Mn(2+)</name>
        <dbReference type="ChEBI" id="CHEBI:29035"/>
        <label>1</label>
    </ligand>
</feature>
<feature type="binding site" evidence="1">
    <location>
        <position position="125"/>
    </location>
    <ligand>
        <name>Mn(2+)</name>
        <dbReference type="ChEBI" id="CHEBI:29035"/>
        <label>2</label>
    </ligand>
</feature>
<feature type="binding site" evidence="1">
    <location>
        <position position="126"/>
    </location>
    <ligand>
        <name>Mg(2+)</name>
        <dbReference type="ChEBI" id="CHEBI:18420"/>
        <label>2</label>
    </ligand>
</feature>
<feature type="binding site" evidence="1">
    <location>
        <position position="126"/>
    </location>
    <ligand>
        <name>Mn(2+)</name>
        <dbReference type="ChEBI" id="CHEBI:29035"/>
        <label>2</label>
    </ligand>
</feature>
<feature type="binding site" evidence="3">
    <location>
        <position position="708"/>
    </location>
    <ligand>
        <name>Zn(2+)</name>
        <dbReference type="ChEBI" id="CHEBI:29105"/>
        <label>1</label>
    </ligand>
</feature>
<feature type="binding site" evidence="3">
    <location>
        <position position="711"/>
    </location>
    <ligand>
        <name>Zn(2+)</name>
        <dbReference type="ChEBI" id="CHEBI:29105"/>
        <label>1</label>
    </ligand>
</feature>
<feature type="binding site" evidence="3">
    <location>
        <position position="725"/>
    </location>
    <ligand>
        <name>Zn(2+)</name>
        <dbReference type="ChEBI" id="CHEBI:29105"/>
        <label>1</label>
    </ligand>
</feature>
<feature type="binding site" evidence="3">
    <location>
        <position position="729"/>
    </location>
    <ligand>
        <name>Zn(2+)</name>
        <dbReference type="ChEBI" id="CHEBI:29105"/>
        <label>1</label>
    </ligand>
</feature>
<feature type="binding site" evidence="3">
    <location>
        <position position="805"/>
    </location>
    <ligand>
        <name>Zn(2+)</name>
        <dbReference type="ChEBI" id="CHEBI:29105"/>
        <label>2</label>
    </ligand>
</feature>
<feature type="binding site" evidence="3">
    <location>
        <position position="808"/>
    </location>
    <ligand>
        <name>Zn(2+)</name>
        <dbReference type="ChEBI" id="CHEBI:29105"/>
        <label>2</label>
    </ligand>
</feature>
<feature type="binding site" evidence="3">
    <location>
        <position position="820"/>
    </location>
    <ligand>
        <name>Zn(2+)</name>
        <dbReference type="ChEBI" id="CHEBI:29105"/>
        <label>2</label>
    </ligand>
</feature>
<feature type="binding site" evidence="3">
    <location>
        <position position="824"/>
    </location>
    <ligand>
        <name>Zn(2+)</name>
        <dbReference type="ChEBI" id="CHEBI:29105"/>
        <label>2</label>
    </ligand>
</feature>
<feature type="mutagenesis site" description="Loss of catalytic activity." evidence="5">
    <original>DE</original>
    <variation>AA</variation>
    <location>
        <begin position="125"/>
        <end position="126"/>
    </location>
</feature>
<feature type="sequence conflict" description="In Ref. 5; AAL14000, 1; BAB15799 and 2; BAB20905." evidence="9" ref="5 1 2">
    <original>R</original>
    <variation>K</variation>
    <location>
        <position position="827"/>
    </location>
</feature>
<feature type="sequence conflict" description="In Ref. 5; AAL14000, 1; BAB15799 and 2; BAB20905." evidence="9" ref="5 1 2">
    <original>I</original>
    <variation>T</variation>
    <location>
        <position position="850"/>
    </location>
</feature>
<gene>
    <name evidence="15" type="primary">PolH</name>
    <name evidence="15" type="synonym">DNApol-eta</name>
    <name evidence="9" type="synonym">DNApolH</name>
    <name evidence="8" type="synonym">dPoleta</name>
    <name evidence="8 10" type="synonym">drad30A</name>
    <name evidence="15" type="ORF">CG7143</name>
</gene>
<evidence type="ECO:0000250" key="1">
    <source>
        <dbReference type="UniProtKB" id="Q9Y253"/>
    </source>
</evidence>
<evidence type="ECO:0000255" key="2">
    <source>
        <dbReference type="PROSITE-ProRule" id="PRU00216"/>
    </source>
</evidence>
<evidence type="ECO:0000255" key="3">
    <source>
        <dbReference type="PROSITE-ProRule" id="PRU01255"/>
    </source>
</evidence>
<evidence type="ECO:0000256" key="4">
    <source>
        <dbReference type="SAM" id="MobiDB-lite"/>
    </source>
</evidence>
<evidence type="ECO:0000269" key="5">
    <source>
    </source>
</evidence>
<evidence type="ECO:0000269" key="6">
    <source>
    </source>
</evidence>
<evidence type="ECO:0000269" key="7">
    <source>
    </source>
</evidence>
<evidence type="ECO:0000303" key="8">
    <source>
    </source>
</evidence>
<evidence type="ECO:0000305" key="9"/>
<evidence type="ECO:0000312" key="10">
    <source>
        <dbReference type="EMBL" id="AAF51794.1"/>
    </source>
</evidence>
<evidence type="ECO:0000312" key="11">
    <source>
        <dbReference type="EMBL" id="AAL14000.1"/>
    </source>
</evidence>
<evidence type="ECO:0000312" key="12">
    <source>
        <dbReference type="EMBL" id="AGW25604.1"/>
    </source>
</evidence>
<evidence type="ECO:0000312" key="13">
    <source>
        <dbReference type="EMBL" id="BAB15799.1"/>
    </source>
</evidence>
<evidence type="ECO:0000312" key="14">
    <source>
        <dbReference type="EMBL" id="BAB20905.1"/>
    </source>
</evidence>
<evidence type="ECO:0000312" key="15">
    <source>
        <dbReference type="FlyBase" id="FBgn0037141"/>
    </source>
</evidence>
<evidence type="ECO:0000312" key="16">
    <source>
        <dbReference type="Proteomes" id="UP000000803"/>
    </source>
</evidence>